<protein>
    <recommendedName>
        <fullName evidence="5">Carnitine O-palmitoyltransferase 2, mitochondrial</fullName>
        <ecNumber evidence="1">2.3.1.21</ecNumber>
    </recommendedName>
    <alternativeName>
        <fullName>Carnitine palmitoyltransferase II</fullName>
        <shortName>CPT II</shortName>
    </alternativeName>
</protein>
<proteinExistence type="evidence at protein level"/>
<reference key="1">
    <citation type="journal article" date="1990" name="J. Biol. Chem.">
        <title>Cloning, sequencing, and expression of a cDNA encoding rat liver mitochondrial carnitine palmitoyltransferase II.</title>
        <authorList>
            <person name="Woeltje K.F."/>
            <person name="Esser V."/>
            <person name="Weis B.C."/>
            <person name="Sen A."/>
            <person name="Cox W.F."/>
            <person name="McPhaul M.J."/>
            <person name="Slaughter C.A."/>
            <person name="Foster D.W."/>
            <person name="McGarry J.D."/>
        </authorList>
    </citation>
    <scope>NUCLEOTIDE SEQUENCE [MRNA]</scope>
    <scope>PARTIAL PROTEIN SEQUENCE</scope>
    <source>
        <strain>Sprague-Dawley</strain>
        <tissue>Liver</tissue>
    </source>
</reference>
<reference key="2">
    <citation type="journal article" date="1997" name="Biochemistry">
        <title>Functional characterization of mitochondrial carnitine palmitoyltransferases I and II expressed in the yeast Pichia pastoris.</title>
        <authorList>
            <person name="de Vries Y."/>
            <person name="Arvidson D.N."/>
            <person name="Waterham H.R."/>
            <person name="Cregg J.M."/>
            <person name="Woldegiorgis G."/>
        </authorList>
    </citation>
    <scope>NUCLEOTIDE SEQUENCE [MRNA]</scope>
    <source>
        <strain>Sprague-Dawley</strain>
        <tissue>Liver</tissue>
    </source>
</reference>
<reference key="3">
    <citation type="journal article" date="1991" name="J. Biol. Chem.">
        <title>Mitochondrial import and processing of rat liver carnitine palmitoyltransferase II defines the amino terminus of the mature protein. Possibility of differential modification of the rat and human isoforms.</title>
        <authorList>
            <person name="Brown N.F."/>
            <person name="Esser V."/>
            <person name="Gonzalez A.D."/>
            <person name="Evans C.T."/>
            <person name="Slaughter C.A."/>
            <person name="Foster D.W."/>
            <person name="McGarry J.D."/>
        </authorList>
    </citation>
    <scope>PEPTIDE CLEAVAGE SITE</scope>
</reference>
<reference evidence="10" key="4">
    <citation type="journal article" date="2006" name="Biochem. Biophys. Res. Commun.">
        <title>Crystal structure of rat carnitine palmitoyltransferase II (CPT-II).</title>
        <authorList>
            <person name="Hsiao Y.-S."/>
            <person name="Jogl G."/>
            <person name="Esser V."/>
            <person name="Tong L."/>
        </authorList>
    </citation>
    <scope>X-RAY CRYSTALLOGRAPHY (1.9 ANGSTROMS) OF 32-656</scope>
</reference>
<reference evidence="7 8 9" key="5">
    <citation type="journal article" date="2006" name="Structure">
        <title>The crystal structure of carnitine palmitoyltransferase 2 and implications for diabetes treatment.</title>
        <authorList>
            <person name="Rufer A.C."/>
            <person name="Thoma R."/>
            <person name="Benz J."/>
            <person name="Stihle M."/>
            <person name="Gsell B."/>
            <person name="De Roo E."/>
            <person name="Banner D.W."/>
            <person name="Mueller F."/>
            <person name="Chomienne O."/>
            <person name="Hennig M."/>
        </authorList>
    </citation>
    <scope>X-RAY CRYSTALLOGRAPHY (1.6 ANGSTROMS) OF 27-658 IN COMPLEX WITH THE SUBSTRATE ANALOG ST1326</scope>
</reference>
<reference evidence="11" key="6">
    <citation type="journal article" date="2007" name="FEBS Lett.">
        <title>Carnitine palmitoyltransferase 2: analysis of membrane association and complex structure with a substrate analog.</title>
        <authorList>
            <person name="Rufer A.C."/>
            <person name="Lomize A."/>
            <person name="Benz J."/>
            <person name="Chomienne O."/>
            <person name="Thoma R."/>
            <person name="Hennig M."/>
        </authorList>
    </citation>
    <scope>X-RAY CRYSTALLOGRAPHY (1.78 ANGSTROMS) OF 27-658 IN COMPLEX WITH PALMITOYL-AMINOCARNITHINE</scope>
    <scope>SUBUNIT</scope>
    <scope>SUBCELLULAR LOCATION</scope>
</reference>
<keyword id="KW-0002">3D-structure</keyword>
<keyword id="KW-0007">Acetylation</keyword>
<keyword id="KW-0012">Acyltransferase</keyword>
<keyword id="KW-0903">Direct protein sequencing</keyword>
<keyword id="KW-0276">Fatty acid metabolism</keyword>
<keyword id="KW-0443">Lipid metabolism</keyword>
<keyword id="KW-0472">Membrane</keyword>
<keyword id="KW-0496">Mitochondrion</keyword>
<keyword id="KW-0999">Mitochondrion inner membrane</keyword>
<keyword id="KW-1185">Reference proteome</keyword>
<keyword id="KW-0808">Transferase</keyword>
<keyword id="KW-0809">Transit peptide</keyword>
<keyword id="KW-0813">Transport</keyword>
<name>CPT2_RAT</name>
<sequence>MMPRLLFRAWPRCPSLVLGAPSRPLSAVSGPDDYLQHSIVPTMHYQDSLPRLPIPKLEDTMKRYLNAQKPLLDDSQFRRTEALCKNFETGVGKELHAHLLAQDKQNKHTSYISGPWFDMYLTARDSIVLNFNPFMAFNPDPKSEYNDQLTRATNLTVSAVRFLKTLQAGLLEPEVFHLNPSKSDTDAFKRLIRFVPPSLSWYGAYLVNAYPLDMSQYFRLFNSTRIPRPNRDELFTDTKARHLLVLRKGHFYVFDVLDQDGNIVNPLEIQAHLKYILSDSSPVPEFPVAYLTSENRDVWAELRQKLIFDGNEETLKKVDSAVFCLCLDDFPMKDLIHLSHTMLHGDGTNRWFDKSFNLIVAEDGTAAVHFEHSWGDGVAVLRFFNEVFRDSTQTPAITPQSQPAATNSSASVETLSFNLSGALKAGITAAKEKFDTTVKTLSIDSIQFQRGGKEFLKKKQLSPDAVAQLAFQMAFLRQYGQTVATYESCSTAAFKHGRTETIRPASIFTKRCSEAFVRDPSKHSVGELQHMMAECSKYHGQLTKEAAMGQGFDRHLYALRYLATARGLNLPELYLDPAYQQMNHNILSTSTLNSPAVSLGGFAPVVPDGFGIAYAVHDDWIGCNVSSYSGRNAREFLHCVQKCLEDIFDALEGKAIKT</sequence>
<organism>
    <name type="scientific">Rattus norvegicus</name>
    <name type="common">Rat</name>
    <dbReference type="NCBI Taxonomy" id="10116"/>
    <lineage>
        <taxon>Eukaryota</taxon>
        <taxon>Metazoa</taxon>
        <taxon>Chordata</taxon>
        <taxon>Craniata</taxon>
        <taxon>Vertebrata</taxon>
        <taxon>Euteleostomi</taxon>
        <taxon>Mammalia</taxon>
        <taxon>Eutheria</taxon>
        <taxon>Euarchontoglires</taxon>
        <taxon>Glires</taxon>
        <taxon>Rodentia</taxon>
        <taxon>Myomorpha</taxon>
        <taxon>Muroidea</taxon>
        <taxon>Muridae</taxon>
        <taxon>Murinae</taxon>
        <taxon>Rattus</taxon>
    </lineage>
</organism>
<feature type="transit peptide" description="Mitochondrion">
    <location>
        <begin position="1"/>
        <end position="25"/>
    </location>
</feature>
<feature type="chain" id="PRO_0000004427" description="Carnitine O-palmitoyltransferase 2, mitochondrial">
    <location>
        <begin position="26"/>
        <end position="658"/>
    </location>
</feature>
<feature type="topological domain" description="Mitochondrial matrix">
    <location>
        <begin position="26"/>
        <end position="178"/>
    </location>
</feature>
<feature type="intramembrane region" description="Note=Mitochondrial inner membrane">
    <location>
        <begin position="179"/>
        <end position="208"/>
    </location>
</feature>
<feature type="topological domain" description="Mitochondrial matrix">
    <location>
        <begin position="209"/>
        <end position="658"/>
    </location>
</feature>
<feature type="active site" description="Proton acceptor" evidence="4 11">
    <location>
        <position position="372"/>
    </location>
</feature>
<feature type="binding site" evidence="3 7">
    <location>
        <begin position="452"/>
        <end position="464"/>
    </location>
    <ligand>
        <name>CoA</name>
        <dbReference type="ChEBI" id="CHEBI:57287"/>
    </ligand>
</feature>
<feature type="binding site" evidence="4 11">
    <location>
        <position position="486"/>
    </location>
    <ligand>
        <name>(R)-carnitine</name>
        <dbReference type="ChEBI" id="CHEBI:16347"/>
    </ligand>
</feature>
<feature type="binding site" evidence="4 11">
    <location>
        <position position="488"/>
    </location>
    <ligand>
        <name>(R)-carnitine</name>
        <dbReference type="ChEBI" id="CHEBI:16347"/>
    </ligand>
</feature>
<feature type="binding site" evidence="4 11">
    <location>
        <position position="499"/>
    </location>
    <ligand>
        <name>(R)-carnitine</name>
        <dbReference type="ChEBI" id="CHEBI:16347"/>
    </ligand>
</feature>
<feature type="modified residue" description="N6-succinyllysine" evidence="2">
    <location>
        <position position="69"/>
    </location>
</feature>
<feature type="modified residue" description="N6-succinyllysine" evidence="2">
    <location>
        <position position="85"/>
    </location>
</feature>
<feature type="modified residue" description="N6-acetyllysine; alternate" evidence="2">
    <location>
        <position position="239"/>
    </location>
</feature>
<feature type="modified residue" description="N6-succinyllysine; alternate" evidence="2">
    <location>
        <position position="239"/>
    </location>
</feature>
<feature type="modified residue" description="N6-acetyllysine" evidence="2">
    <location>
        <position position="305"/>
    </location>
</feature>
<feature type="modified residue" description="N6-succinyllysine" evidence="2">
    <location>
        <position position="424"/>
    </location>
</feature>
<feature type="modified residue" description="N6-succinyllysine" evidence="2">
    <location>
        <position position="439"/>
    </location>
</feature>
<feature type="modified residue" description="N6-acetyllysine; alternate" evidence="2">
    <location>
        <position position="510"/>
    </location>
</feature>
<feature type="modified residue" description="N6-succinyllysine; alternate" evidence="2">
    <location>
        <position position="510"/>
    </location>
</feature>
<feature type="modified residue" description="N6-acetyllysine; alternate" evidence="2">
    <location>
        <position position="544"/>
    </location>
</feature>
<feature type="modified residue" description="N6-succinyllysine; alternate" evidence="2">
    <location>
        <position position="544"/>
    </location>
</feature>
<feature type="sequence conflict" description="In Ref. 2; AAB48047." evidence="5" ref="2">
    <original>M</original>
    <variation>V</variation>
    <location>
        <position position="135"/>
    </location>
</feature>
<feature type="sequence conflict" description="In Ref. 2; AAB48047." evidence="5" ref="2">
    <original>Q</original>
    <variation>R</variation>
    <location>
        <position position="167"/>
    </location>
</feature>
<feature type="sequence conflict" description="In Ref. 2; AAB48047." evidence="5" ref="2">
    <original>V</original>
    <variation>I</variation>
    <location>
        <position position="245"/>
    </location>
</feature>
<feature type="sequence conflict" description="In Ref. 2; AAB48047." evidence="5" ref="2">
    <original>L</original>
    <variation>S</variation>
    <location>
        <position position="267"/>
    </location>
</feature>
<feature type="sequence conflict" description="In Ref. 2; AAB48047." evidence="5" ref="2">
    <original>D</original>
    <variation>E</variation>
    <location>
        <position position="346"/>
    </location>
</feature>
<feature type="sequence conflict" description="In Ref. 2; AAB48047." evidence="5" ref="2">
    <original>S</original>
    <variation>A</variation>
    <location>
        <position position="373"/>
    </location>
</feature>
<feature type="sequence conflict" description="In Ref. 2; AAB48047." evidence="5" ref="2">
    <original>T</original>
    <variation>S</variation>
    <location>
        <position position="394"/>
    </location>
</feature>
<feature type="turn" evidence="12">
    <location>
        <begin position="42"/>
        <end position="45"/>
    </location>
</feature>
<feature type="helix" evidence="12">
    <location>
        <begin position="46"/>
        <end position="48"/>
    </location>
</feature>
<feature type="helix" evidence="12">
    <location>
        <begin position="57"/>
        <end position="68"/>
    </location>
</feature>
<feature type="turn" evidence="12">
    <location>
        <begin position="69"/>
        <end position="71"/>
    </location>
</feature>
<feature type="helix" evidence="12">
    <location>
        <begin position="74"/>
        <end position="89"/>
    </location>
</feature>
<feature type="helix" evidence="12">
    <location>
        <begin position="91"/>
        <end position="105"/>
    </location>
</feature>
<feature type="turn" evidence="15">
    <location>
        <begin position="106"/>
        <end position="108"/>
    </location>
</feature>
<feature type="helix" evidence="12">
    <location>
        <begin position="113"/>
        <end position="122"/>
    </location>
</feature>
<feature type="turn" evidence="12">
    <location>
        <begin position="128"/>
        <end position="131"/>
    </location>
</feature>
<feature type="strand" evidence="12">
    <location>
        <begin position="134"/>
        <end position="137"/>
    </location>
</feature>
<feature type="helix" evidence="12">
    <location>
        <begin position="143"/>
        <end position="146"/>
    </location>
</feature>
<feature type="helix" evidence="12">
    <location>
        <begin position="148"/>
        <end position="167"/>
    </location>
</feature>
<feature type="strand" evidence="12">
    <location>
        <begin position="175"/>
        <end position="178"/>
    </location>
</feature>
<feature type="helix" evidence="12">
    <location>
        <begin position="180"/>
        <end position="183"/>
    </location>
</feature>
<feature type="helix" evidence="12">
    <location>
        <begin position="186"/>
        <end position="192"/>
    </location>
</feature>
<feature type="turn" evidence="12">
    <location>
        <begin position="197"/>
        <end position="199"/>
    </location>
</feature>
<feature type="helix" evidence="12">
    <location>
        <begin position="200"/>
        <end position="206"/>
    </location>
</feature>
<feature type="strand" evidence="12">
    <location>
        <begin position="209"/>
        <end position="211"/>
    </location>
</feature>
<feature type="helix" evidence="12">
    <location>
        <begin position="217"/>
        <end position="220"/>
    </location>
</feature>
<feature type="strand" evidence="12">
    <location>
        <begin position="221"/>
        <end position="226"/>
    </location>
</feature>
<feature type="strand" evidence="12">
    <location>
        <begin position="229"/>
        <end position="231"/>
    </location>
</feature>
<feature type="strand" evidence="12">
    <location>
        <begin position="233"/>
        <end position="236"/>
    </location>
</feature>
<feature type="strand" evidence="12">
    <location>
        <begin position="242"/>
        <end position="247"/>
    </location>
</feature>
<feature type="strand" evidence="12">
    <location>
        <begin position="250"/>
        <end position="257"/>
    </location>
</feature>
<feature type="helix" evidence="12">
    <location>
        <begin position="266"/>
        <end position="278"/>
    </location>
</feature>
<feature type="helix" evidence="12">
    <location>
        <begin position="288"/>
        <end position="293"/>
    </location>
</feature>
<feature type="helix" evidence="12">
    <location>
        <begin position="296"/>
        <end position="308"/>
    </location>
</feature>
<feature type="turn" evidence="13">
    <location>
        <begin position="309"/>
        <end position="311"/>
    </location>
</feature>
<feature type="helix" evidence="12">
    <location>
        <begin position="312"/>
        <end position="320"/>
    </location>
</feature>
<feature type="strand" evidence="12">
    <location>
        <begin position="324"/>
        <end position="327"/>
    </location>
</feature>
<feature type="helix" evidence="12">
    <location>
        <begin position="335"/>
        <end position="343"/>
    </location>
</feature>
<feature type="turn" evidence="12">
    <location>
        <begin position="344"/>
        <end position="346"/>
    </location>
</feature>
<feature type="strand" evidence="12">
    <location>
        <begin position="347"/>
        <end position="349"/>
    </location>
</feature>
<feature type="strand" evidence="12">
    <location>
        <begin position="354"/>
        <end position="360"/>
    </location>
</feature>
<feature type="strand" evidence="12">
    <location>
        <begin position="366"/>
        <end position="370"/>
    </location>
</feature>
<feature type="strand" evidence="14">
    <location>
        <begin position="372"/>
        <end position="374"/>
    </location>
</feature>
<feature type="helix" evidence="12">
    <location>
        <begin position="378"/>
        <end position="393"/>
    </location>
</feature>
<feature type="helix" evidence="12">
    <location>
        <begin position="408"/>
        <end position="411"/>
    </location>
</feature>
<feature type="strand" evidence="12">
    <location>
        <begin position="412"/>
        <end position="414"/>
    </location>
</feature>
<feature type="helix" evidence="12">
    <location>
        <begin position="421"/>
        <end position="438"/>
    </location>
</feature>
<feature type="strand" evidence="12">
    <location>
        <begin position="442"/>
        <end position="448"/>
    </location>
</feature>
<feature type="helix" evidence="12">
    <location>
        <begin position="453"/>
        <end position="458"/>
    </location>
</feature>
<feature type="helix" evidence="12">
    <location>
        <begin position="463"/>
        <end position="479"/>
    </location>
</feature>
<feature type="strand" evidence="12">
    <location>
        <begin position="485"/>
        <end position="490"/>
    </location>
</feature>
<feature type="strand" evidence="12">
    <location>
        <begin position="499"/>
        <end position="502"/>
    </location>
</feature>
<feature type="helix" evidence="12">
    <location>
        <begin position="507"/>
        <end position="517"/>
    </location>
</feature>
<feature type="helix" evidence="12">
    <location>
        <begin position="520"/>
        <end position="522"/>
    </location>
</feature>
<feature type="helix" evidence="12">
    <location>
        <begin position="525"/>
        <end position="547"/>
    </location>
</feature>
<feature type="helix" evidence="12">
    <location>
        <begin position="553"/>
        <end position="565"/>
    </location>
</feature>
<feature type="helix" evidence="12">
    <location>
        <begin position="572"/>
        <end position="575"/>
    </location>
</feature>
<feature type="helix" evidence="12">
    <location>
        <begin position="577"/>
        <end position="582"/>
    </location>
</feature>
<feature type="strand" evidence="12">
    <location>
        <begin position="586"/>
        <end position="591"/>
    </location>
</feature>
<feature type="strand" evidence="12">
    <location>
        <begin position="597"/>
        <end position="601"/>
    </location>
</feature>
<feature type="strand" evidence="12">
    <location>
        <begin position="610"/>
        <end position="616"/>
    </location>
</feature>
<feature type="strand" evidence="12">
    <location>
        <begin position="621"/>
        <end position="627"/>
    </location>
</feature>
<feature type="strand" evidence="13">
    <location>
        <begin position="629"/>
        <end position="631"/>
    </location>
</feature>
<feature type="helix" evidence="12">
    <location>
        <begin position="633"/>
        <end position="651"/>
    </location>
</feature>
<comment type="function">
    <text evidence="1">Involved in the intramitochondrial synthesis of acylcarnitines from accumulated acyl-CoA metabolites. Reconverts acylcarnitines back into the respective acyl-CoA esters that can then undergo beta-oxidation, an essential step for the mitochondrial uptake of long-chain fatty acids and their subsequent beta-oxidation in the mitochondrion. Active with medium (C8-C12) and long-chain (C14-C18) acyl-CoA esters.</text>
</comment>
<comment type="catalytic activity">
    <reaction evidence="1">
        <text>(R)-carnitine + hexadecanoyl-CoA = O-hexadecanoyl-(R)-carnitine + CoA</text>
        <dbReference type="Rhea" id="RHEA:12661"/>
        <dbReference type="ChEBI" id="CHEBI:16347"/>
        <dbReference type="ChEBI" id="CHEBI:17490"/>
        <dbReference type="ChEBI" id="CHEBI:57287"/>
        <dbReference type="ChEBI" id="CHEBI:57379"/>
        <dbReference type="EC" id="2.3.1.21"/>
    </reaction>
    <physiologicalReaction direction="right-to-left" evidence="1">
        <dbReference type="Rhea" id="RHEA:12663"/>
    </physiologicalReaction>
</comment>
<comment type="catalytic activity">
    <reaction evidence="1">
        <text>octanoyl-CoA + (R)-carnitine = O-octanoyl-(R)-carnitine + CoA</text>
        <dbReference type="Rhea" id="RHEA:17177"/>
        <dbReference type="ChEBI" id="CHEBI:16347"/>
        <dbReference type="ChEBI" id="CHEBI:18102"/>
        <dbReference type="ChEBI" id="CHEBI:57287"/>
        <dbReference type="ChEBI" id="CHEBI:57386"/>
    </reaction>
</comment>
<comment type="catalytic activity">
    <reaction evidence="1">
        <text>decanoyl-CoA + (R)-carnitine = O-decanoyl-(R)-carnitine + CoA</text>
        <dbReference type="Rhea" id="RHEA:44828"/>
        <dbReference type="ChEBI" id="CHEBI:16347"/>
        <dbReference type="ChEBI" id="CHEBI:28717"/>
        <dbReference type="ChEBI" id="CHEBI:57287"/>
        <dbReference type="ChEBI" id="CHEBI:61430"/>
    </reaction>
</comment>
<comment type="catalytic activity">
    <reaction evidence="1">
        <text>dodecanoyl-CoA + (R)-carnitine = O-dodecanoyl-R-carnitine + CoA</text>
        <dbReference type="Rhea" id="RHEA:40279"/>
        <dbReference type="ChEBI" id="CHEBI:16347"/>
        <dbReference type="ChEBI" id="CHEBI:57287"/>
        <dbReference type="ChEBI" id="CHEBI:57375"/>
        <dbReference type="ChEBI" id="CHEBI:77086"/>
    </reaction>
</comment>
<comment type="catalytic activity">
    <reaction evidence="1">
        <text>tetradecanoyl-CoA + (R)-carnitine = O-tetradecanoyl-(R)-carnitine + CoA</text>
        <dbReference type="Rhea" id="RHEA:44832"/>
        <dbReference type="ChEBI" id="CHEBI:16347"/>
        <dbReference type="ChEBI" id="CHEBI:57287"/>
        <dbReference type="ChEBI" id="CHEBI:57385"/>
        <dbReference type="ChEBI" id="CHEBI:84634"/>
    </reaction>
</comment>
<comment type="catalytic activity">
    <reaction evidence="1">
        <text>(R)-carnitine + octadecanoyl-CoA = O-octadecanoyl-(R)-carnitine + CoA</text>
        <dbReference type="Rhea" id="RHEA:44840"/>
        <dbReference type="ChEBI" id="CHEBI:16347"/>
        <dbReference type="ChEBI" id="CHEBI:57287"/>
        <dbReference type="ChEBI" id="CHEBI:57394"/>
        <dbReference type="ChEBI" id="CHEBI:84644"/>
    </reaction>
</comment>
<comment type="catalytic activity">
    <reaction evidence="1">
        <text>eicosanoyl-CoA + (R)-carnitine = O-eicosanoyl-(R)-carnitine + CoA</text>
        <dbReference type="Rhea" id="RHEA:44844"/>
        <dbReference type="ChEBI" id="CHEBI:16347"/>
        <dbReference type="ChEBI" id="CHEBI:57287"/>
        <dbReference type="ChEBI" id="CHEBI:57380"/>
        <dbReference type="ChEBI" id="CHEBI:84645"/>
    </reaction>
</comment>
<comment type="catalytic activity">
    <reaction evidence="1">
        <text>(9Z)-tetradecenoyl-CoA + (R)-carnitine = O-(9Z)-tetradecenoyl-(R)-carnitine + CoA</text>
        <dbReference type="Rhea" id="RHEA:44848"/>
        <dbReference type="ChEBI" id="CHEBI:16347"/>
        <dbReference type="ChEBI" id="CHEBI:57287"/>
        <dbReference type="ChEBI" id="CHEBI:65060"/>
        <dbReference type="ChEBI" id="CHEBI:84647"/>
    </reaction>
</comment>
<comment type="catalytic activity">
    <reaction evidence="1">
        <text>(5Z)-tetradecenoyl-CoA + (R)-carnitine = O-(5Z)-tetradecenoyl-(R)-carnitine + CoA</text>
        <dbReference type="Rhea" id="RHEA:44852"/>
        <dbReference type="ChEBI" id="CHEBI:16347"/>
        <dbReference type="ChEBI" id="CHEBI:57287"/>
        <dbReference type="ChEBI" id="CHEBI:84649"/>
        <dbReference type="ChEBI" id="CHEBI:84650"/>
    </reaction>
</comment>
<comment type="catalytic activity">
    <reaction evidence="1">
        <text>(R)-carnitine + (9Z)-octadecenoyl-CoA = O-(9Z)-octadecenoyl-(R)-carnitine + CoA</text>
        <dbReference type="Rhea" id="RHEA:44856"/>
        <dbReference type="ChEBI" id="CHEBI:16347"/>
        <dbReference type="ChEBI" id="CHEBI:57287"/>
        <dbReference type="ChEBI" id="CHEBI:57387"/>
        <dbReference type="ChEBI" id="CHEBI:84651"/>
    </reaction>
</comment>
<comment type="catalytic activity">
    <reaction evidence="1">
        <text>4,8-dimethylnonanoyl-CoA + (R)-carnitine = O-4,8-dimethylnonanoyl-(R)-carnitine + CoA</text>
        <dbReference type="Rhea" id="RHEA:44860"/>
        <dbReference type="ChEBI" id="CHEBI:16347"/>
        <dbReference type="ChEBI" id="CHEBI:57287"/>
        <dbReference type="ChEBI" id="CHEBI:77061"/>
        <dbReference type="ChEBI" id="CHEBI:84654"/>
    </reaction>
</comment>
<comment type="pathway">
    <text evidence="1">Lipid metabolism; fatty acid beta-oxidation.</text>
</comment>
<comment type="subcellular location">
    <subcellularLocation>
        <location evidence="4">Mitochondrion inner membrane</location>
        <topology evidence="4">Peripheral membrane protein</topology>
        <orientation evidence="4">Matrix side</orientation>
    </subcellularLocation>
</comment>
<comment type="similarity">
    <text evidence="5">Belongs to the carnitine/choline acetyltransferase family.</text>
</comment>
<dbReference type="EC" id="2.3.1.21" evidence="1"/>
<dbReference type="EMBL" id="J05470">
    <property type="protein sequence ID" value="AAB02339.1"/>
    <property type="molecule type" value="mRNA"/>
</dbReference>
<dbReference type="EMBL" id="U88295">
    <property type="protein sequence ID" value="AAB48047.1"/>
    <property type="molecule type" value="mRNA"/>
</dbReference>
<dbReference type="PIR" id="A35447">
    <property type="entry name" value="A35447"/>
</dbReference>
<dbReference type="RefSeq" id="NP_037062.1">
    <property type="nucleotide sequence ID" value="NM_012930.1"/>
</dbReference>
<dbReference type="PDB" id="2DEB">
    <property type="method" value="X-ray"/>
    <property type="resolution" value="1.60 A"/>
    <property type="chains" value="A/B=27-658"/>
</dbReference>
<dbReference type="PDB" id="2FW3">
    <property type="method" value="X-ray"/>
    <property type="resolution" value="2.50 A"/>
    <property type="chains" value="A=27-658"/>
</dbReference>
<dbReference type="PDB" id="2FYO">
    <property type="method" value="X-ray"/>
    <property type="resolution" value="2.00 A"/>
    <property type="chains" value="A=27-658"/>
</dbReference>
<dbReference type="PDB" id="2H4T">
    <property type="method" value="X-ray"/>
    <property type="resolution" value="1.90 A"/>
    <property type="chains" value="A/B=32-656"/>
</dbReference>
<dbReference type="PDB" id="2RCU">
    <property type="method" value="X-ray"/>
    <property type="resolution" value="1.78 A"/>
    <property type="chains" value="A/B=27-658"/>
</dbReference>
<dbReference type="PDB" id="4EP9">
    <property type="method" value="X-ray"/>
    <property type="resolution" value="2.03 A"/>
    <property type="chains" value="A=27-658"/>
</dbReference>
<dbReference type="PDB" id="4EPH">
    <property type="method" value="X-ray"/>
    <property type="resolution" value="2.30 A"/>
    <property type="chains" value="A=27-658"/>
</dbReference>
<dbReference type="PDB" id="4EYW">
    <property type="method" value="X-ray"/>
    <property type="resolution" value="1.88 A"/>
    <property type="chains" value="A/B=27-658"/>
</dbReference>
<dbReference type="PDBsum" id="2DEB"/>
<dbReference type="PDBsum" id="2FW3"/>
<dbReference type="PDBsum" id="2FYO"/>
<dbReference type="PDBsum" id="2H4T"/>
<dbReference type="PDBsum" id="2RCU"/>
<dbReference type="PDBsum" id="4EP9"/>
<dbReference type="PDBsum" id="4EPH"/>
<dbReference type="PDBsum" id="4EYW"/>
<dbReference type="SMR" id="P18886"/>
<dbReference type="BioGRID" id="247448">
    <property type="interactions" value="2"/>
</dbReference>
<dbReference type="FunCoup" id="P18886">
    <property type="interactions" value="1750"/>
</dbReference>
<dbReference type="STRING" id="10116.ENSRNOP00000016954"/>
<dbReference type="BindingDB" id="P18886"/>
<dbReference type="ChEMBL" id="CHEMBL4037"/>
<dbReference type="DrugCentral" id="P18886"/>
<dbReference type="GuidetoPHARMACOLOGY" id="3252"/>
<dbReference type="GlyGen" id="P18886">
    <property type="glycosylation" value="1 site, 1 O-linked glycan (1 site)"/>
</dbReference>
<dbReference type="iPTMnet" id="P18886"/>
<dbReference type="PhosphoSitePlus" id="P18886"/>
<dbReference type="jPOST" id="P18886"/>
<dbReference type="PaxDb" id="10116-ENSRNOP00000016954"/>
<dbReference type="GeneID" id="25413"/>
<dbReference type="KEGG" id="rno:25413"/>
<dbReference type="UCSC" id="RGD:2398">
    <property type="organism name" value="rat"/>
</dbReference>
<dbReference type="AGR" id="RGD:2398"/>
<dbReference type="CTD" id="1376"/>
<dbReference type="RGD" id="2398">
    <property type="gene designation" value="Cpt2"/>
</dbReference>
<dbReference type="eggNOG" id="KOG3719">
    <property type="taxonomic scope" value="Eukaryota"/>
</dbReference>
<dbReference type="InParanoid" id="P18886"/>
<dbReference type="OrthoDB" id="240216at2759"/>
<dbReference type="PhylomeDB" id="P18886"/>
<dbReference type="BioCyc" id="MetaCyc:MONOMER-14441"/>
<dbReference type="BRENDA" id="2.3.1.21">
    <property type="organism ID" value="5301"/>
</dbReference>
<dbReference type="Reactome" id="R-RNO-200425">
    <property type="pathway name" value="Carnitine shuttle"/>
</dbReference>
<dbReference type="SABIO-RK" id="P18886"/>
<dbReference type="UniPathway" id="UPA00659"/>
<dbReference type="EvolutionaryTrace" id="P18886"/>
<dbReference type="PRO" id="PR:P18886"/>
<dbReference type="Proteomes" id="UP000002494">
    <property type="component" value="Unplaced"/>
</dbReference>
<dbReference type="GO" id="GO:0005743">
    <property type="term" value="C:mitochondrial inner membrane"/>
    <property type="evidence" value="ECO:0007669"/>
    <property type="project" value="UniProtKB-SubCell"/>
</dbReference>
<dbReference type="GO" id="GO:0005739">
    <property type="term" value="C:mitochondrion"/>
    <property type="evidence" value="ECO:0000318"/>
    <property type="project" value="GO_Central"/>
</dbReference>
<dbReference type="GO" id="GO:0016746">
    <property type="term" value="F:acyltransferase activity"/>
    <property type="evidence" value="ECO:0000266"/>
    <property type="project" value="RGD"/>
</dbReference>
<dbReference type="GO" id="GO:0008458">
    <property type="term" value="F:carnitine O-octanoyltransferase activity"/>
    <property type="evidence" value="ECO:0007669"/>
    <property type="project" value="RHEA"/>
</dbReference>
<dbReference type="GO" id="GO:0004095">
    <property type="term" value="F:carnitine O-palmitoyltransferase activity"/>
    <property type="evidence" value="ECO:0000314"/>
    <property type="project" value="RGD"/>
</dbReference>
<dbReference type="GO" id="GO:0009437">
    <property type="term" value="P:carnitine metabolic process"/>
    <property type="evidence" value="ECO:0000250"/>
    <property type="project" value="UniProtKB"/>
</dbReference>
<dbReference type="GO" id="GO:0006635">
    <property type="term" value="P:fatty acid beta-oxidation"/>
    <property type="evidence" value="ECO:0000270"/>
    <property type="project" value="RGD"/>
</dbReference>
<dbReference type="GO" id="GO:0001701">
    <property type="term" value="P:in utero embryonic development"/>
    <property type="evidence" value="ECO:0000266"/>
    <property type="project" value="RGD"/>
</dbReference>
<dbReference type="GO" id="GO:0001676">
    <property type="term" value="P:long-chain fatty acid metabolic process"/>
    <property type="evidence" value="ECO:0000250"/>
    <property type="project" value="UniProtKB"/>
</dbReference>
<dbReference type="GO" id="GO:0015909">
    <property type="term" value="P:long-chain fatty acid transport"/>
    <property type="evidence" value="ECO:0000304"/>
    <property type="project" value="RGD"/>
</dbReference>
<dbReference type="GO" id="GO:0120162">
    <property type="term" value="P:positive regulation of cold-induced thermogenesis"/>
    <property type="evidence" value="ECO:0000250"/>
    <property type="project" value="YuBioLab"/>
</dbReference>
<dbReference type="GO" id="GO:0070542">
    <property type="term" value="P:response to fatty acid"/>
    <property type="evidence" value="ECO:0000270"/>
    <property type="project" value="RGD"/>
</dbReference>
<dbReference type="FunFam" id="1.20.1280.180:FF:000001">
    <property type="entry name" value="Carnitine O-palmitoyltransferase 2, mitochondrial"/>
    <property type="match status" value="1"/>
</dbReference>
<dbReference type="FunFam" id="1.10.275.20:FF:000001">
    <property type="entry name" value="carnitine O-palmitoyltransferase 2, mitochondrial"/>
    <property type="match status" value="1"/>
</dbReference>
<dbReference type="FunFam" id="3.30.559.10:FF:000010">
    <property type="entry name" value="carnitine O-palmitoyltransferase 2, mitochondrial"/>
    <property type="match status" value="1"/>
</dbReference>
<dbReference type="Gene3D" id="1.20.1280.180">
    <property type="match status" value="1"/>
</dbReference>
<dbReference type="Gene3D" id="3.30.559.10">
    <property type="entry name" value="Chloramphenicol acetyltransferase-like domain"/>
    <property type="match status" value="1"/>
</dbReference>
<dbReference type="Gene3D" id="1.10.275.20">
    <property type="entry name" value="Choline/Carnitine o-acyltransferase"/>
    <property type="match status" value="1"/>
</dbReference>
<dbReference type="Gene3D" id="3.30.559.70">
    <property type="entry name" value="Choline/Carnitine o-acyltransferase, domain 2"/>
    <property type="match status" value="1"/>
</dbReference>
<dbReference type="InterPro" id="IPR000542">
    <property type="entry name" value="Carn_acyl_trans"/>
</dbReference>
<dbReference type="InterPro" id="IPR042572">
    <property type="entry name" value="Carn_acyl_trans_N"/>
</dbReference>
<dbReference type="InterPro" id="IPR023213">
    <property type="entry name" value="CAT-like_dom_sf"/>
</dbReference>
<dbReference type="InterPro" id="IPR039551">
    <property type="entry name" value="Cho/carn_acyl_trans"/>
</dbReference>
<dbReference type="InterPro" id="IPR042231">
    <property type="entry name" value="Cho/carn_acyl_trans_2"/>
</dbReference>
<dbReference type="PANTHER" id="PTHR22589">
    <property type="entry name" value="CARNITINE O-ACYLTRANSFERASE"/>
    <property type="match status" value="1"/>
</dbReference>
<dbReference type="PANTHER" id="PTHR22589:SF51">
    <property type="entry name" value="CARNITINE O-PALMITOYLTRANSFERASE 2, MITOCHONDRIAL"/>
    <property type="match status" value="1"/>
</dbReference>
<dbReference type="Pfam" id="PF00755">
    <property type="entry name" value="Carn_acyltransf"/>
    <property type="match status" value="1"/>
</dbReference>
<dbReference type="SUPFAM" id="SSF52777">
    <property type="entry name" value="CoA-dependent acyltransferases"/>
    <property type="match status" value="2"/>
</dbReference>
<dbReference type="PROSITE" id="PS00439">
    <property type="entry name" value="ACYLTRANSF_C_1"/>
    <property type="match status" value="1"/>
</dbReference>
<dbReference type="PROSITE" id="PS00440">
    <property type="entry name" value="ACYLTRANSF_C_2"/>
    <property type="match status" value="1"/>
</dbReference>
<gene>
    <name evidence="6" type="primary">Cpt2</name>
    <name type="synonym">Cpt-2</name>
</gene>
<evidence type="ECO:0000250" key="1">
    <source>
        <dbReference type="UniProtKB" id="P23786"/>
    </source>
</evidence>
<evidence type="ECO:0000250" key="2">
    <source>
        <dbReference type="UniProtKB" id="P52825"/>
    </source>
</evidence>
<evidence type="ECO:0000269" key="3">
    <source>
    </source>
</evidence>
<evidence type="ECO:0000269" key="4">
    <source>
    </source>
</evidence>
<evidence type="ECO:0000305" key="5"/>
<evidence type="ECO:0000312" key="6">
    <source>
        <dbReference type="RGD" id="2398"/>
    </source>
</evidence>
<evidence type="ECO:0007744" key="7">
    <source>
        <dbReference type="PDB" id="2DEB"/>
    </source>
</evidence>
<evidence type="ECO:0007744" key="8">
    <source>
        <dbReference type="PDB" id="2FW3"/>
    </source>
</evidence>
<evidence type="ECO:0007744" key="9">
    <source>
        <dbReference type="PDB" id="2FYO"/>
    </source>
</evidence>
<evidence type="ECO:0007744" key="10">
    <source>
        <dbReference type="PDB" id="2H4T"/>
    </source>
</evidence>
<evidence type="ECO:0007744" key="11">
    <source>
        <dbReference type="PDB" id="2RCU"/>
    </source>
</evidence>
<evidence type="ECO:0007829" key="12">
    <source>
        <dbReference type="PDB" id="2DEB"/>
    </source>
</evidence>
<evidence type="ECO:0007829" key="13">
    <source>
        <dbReference type="PDB" id="2FW3"/>
    </source>
</evidence>
<evidence type="ECO:0007829" key="14">
    <source>
        <dbReference type="PDB" id="2RCU"/>
    </source>
</evidence>
<evidence type="ECO:0007829" key="15">
    <source>
        <dbReference type="PDB" id="4EYW"/>
    </source>
</evidence>
<accession>P18886</accession>
<accession>P97781</accession>